<reference key="1">
    <citation type="journal article" date="2005" name="Jpn. Agric. Res. Q.">
        <title>Genome sequence of Xanthomonas oryzae pv. oryzae suggests contribution of large numbers of effector genes and insertion sequences to its race diversity.</title>
        <authorList>
            <person name="Ochiai H."/>
            <person name="Inoue Y."/>
            <person name="Takeya M."/>
            <person name="Sasaki A."/>
            <person name="Kaku H."/>
        </authorList>
    </citation>
    <scope>NUCLEOTIDE SEQUENCE [LARGE SCALE GENOMIC DNA]</scope>
    <source>
        <strain>MAFF 311018</strain>
    </source>
</reference>
<accession>Q2P3P5</accession>
<dbReference type="EC" id="3.1.15.-" evidence="1"/>
<dbReference type="EMBL" id="AP008229">
    <property type="protein sequence ID" value="BAE68832.1"/>
    <property type="molecule type" value="Genomic_DNA"/>
</dbReference>
<dbReference type="RefSeq" id="WP_011258903.1">
    <property type="nucleotide sequence ID" value="NC_007705.1"/>
</dbReference>
<dbReference type="SMR" id="Q2P3P5"/>
<dbReference type="KEGG" id="xom:XOO2077"/>
<dbReference type="HOGENOM" id="CLU_064761_2_0_6"/>
<dbReference type="GO" id="GO:0005737">
    <property type="term" value="C:cytoplasm"/>
    <property type="evidence" value="ECO:0007669"/>
    <property type="project" value="UniProtKB-SubCell"/>
</dbReference>
<dbReference type="GO" id="GO:0000175">
    <property type="term" value="F:3'-5'-RNA exonuclease activity"/>
    <property type="evidence" value="ECO:0007669"/>
    <property type="project" value="InterPro"/>
</dbReference>
<dbReference type="GO" id="GO:0003676">
    <property type="term" value="F:nucleic acid binding"/>
    <property type="evidence" value="ECO:0007669"/>
    <property type="project" value="InterPro"/>
</dbReference>
<dbReference type="GO" id="GO:0006259">
    <property type="term" value="P:DNA metabolic process"/>
    <property type="evidence" value="ECO:0007669"/>
    <property type="project" value="UniProtKB-ARBA"/>
</dbReference>
<dbReference type="CDD" id="cd06135">
    <property type="entry name" value="Orn"/>
    <property type="match status" value="1"/>
</dbReference>
<dbReference type="FunFam" id="3.30.420.10:FF:000003">
    <property type="entry name" value="Oligoribonuclease"/>
    <property type="match status" value="1"/>
</dbReference>
<dbReference type="Gene3D" id="3.30.420.10">
    <property type="entry name" value="Ribonuclease H-like superfamily/Ribonuclease H"/>
    <property type="match status" value="1"/>
</dbReference>
<dbReference type="HAMAP" id="MF_00045">
    <property type="entry name" value="Oligoribonuclease"/>
    <property type="match status" value="1"/>
</dbReference>
<dbReference type="InterPro" id="IPR013520">
    <property type="entry name" value="Exonuclease_RNaseT/DNA_pol3"/>
</dbReference>
<dbReference type="InterPro" id="IPR022894">
    <property type="entry name" value="Oligoribonuclease"/>
</dbReference>
<dbReference type="InterPro" id="IPR012337">
    <property type="entry name" value="RNaseH-like_sf"/>
</dbReference>
<dbReference type="InterPro" id="IPR036397">
    <property type="entry name" value="RNaseH_sf"/>
</dbReference>
<dbReference type="NCBIfam" id="NF003765">
    <property type="entry name" value="PRK05359.1"/>
    <property type="match status" value="1"/>
</dbReference>
<dbReference type="PANTHER" id="PTHR11046">
    <property type="entry name" value="OLIGORIBONUCLEASE, MITOCHONDRIAL"/>
    <property type="match status" value="1"/>
</dbReference>
<dbReference type="PANTHER" id="PTHR11046:SF0">
    <property type="entry name" value="OLIGORIBONUCLEASE, MITOCHONDRIAL"/>
    <property type="match status" value="1"/>
</dbReference>
<dbReference type="Pfam" id="PF00929">
    <property type="entry name" value="RNase_T"/>
    <property type="match status" value="1"/>
</dbReference>
<dbReference type="SMART" id="SM00479">
    <property type="entry name" value="EXOIII"/>
    <property type="match status" value="1"/>
</dbReference>
<dbReference type="SUPFAM" id="SSF53098">
    <property type="entry name" value="Ribonuclease H-like"/>
    <property type="match status" value="1"/>
</dbReference>
<gene>
    <name evidence="1" type="primary">orn</name>
    <name type="ordered locus">XOO2077</name>
</gene>
<evidence type="ECO:0000255" key="1">
    <source>
        <dbReference type="HAMAP-Rule" id="MF_00045"/>
    </source>
</evidence>
<keyword id="KW-0963">Cytoplasm</keyword>
<keyword id="KW-0269">Exonuclease</keyword>
<keyword id="KW-0378">Hydrolase</keyword>
<keyword id="KW-0540">Nuclease</keyword>
<name>ORN_XANOM</name>
<organism>
    <name type="scientific">Xanthomonas oryzae pv. oryzae (strain MAFF 311018)</name>
    <dbReference type="NCBI Taxonomy" id="342109"/>
    <lineage>
        <taxon>Bacteria</taxon>
        <taxon>Pseudomonadati</taxon>
        <taxon>Pseudomonadota</taxon>
        <taxon>Gammaproteobacteria</taxon>
        <taxon>Lysobacterales</taxon>
        <taxon>Lysobacteraceae</taxon>
        <taxon>Xanthomonas</taxon>
    </lineage>
</organism>
<sequence>MAENLAGNDRLIWIDLEMTGLDTDRDSIIEIATIVTDAQLNVLAEGPELAIAHPLETLEAMDEWNRNQHRRSGLWQRVLDSQVTHAQAEAQTVAFLGEWIRAGASPMCGNSICQDRRFLHRQMSRLERYFHYRNLDVSTIKELARRWAPTVANGFAKSSAHTALSDVRDSINELRHYRQFMGALGGDTAMDVEG</sequence>
<protein>
    <recommendedName>
        <fullName evidence="1">Oligoribonuclease</fullName>
        <ecNumber evidence="1">3.1.15.-</ecNumber>
    </recommendedName>
</protein>
<feature type="chain" id="PRO_1000004299" description="Oligoribonuclease">
    <location>
        <begin position="1"/>
        <end position="194"/>
    </location>
</feature>
<feature type="domain" description="Exonuclease" evidence="1">
    <location>
        <begin position="11"/>
        <end position="174"/>
    </location>
</feature>
<feature type="active site" evidence="1">
    <location>
        <position position="132"/>
    </location>
</feature>
<comment type="function">
    <text evidence="1">3'-to-5' exoribonuclease specific for small oligoribonucleotides.</text>
</comment>
<comment type="subcellular location">
    <subcellularLocation>
        <location evidence="1">Cytoplasm</location>
    </subcellularLocation>
</comment>
<comment type="similarity">
    <text evidence="1">Belongs to the oligoribonuclease family.</text>
</comment>
<proteinExistence type="inferred from homology"/>